<gene>
    <name type="primary">SIR4</name>
    <name type="synonym">ASD1</name>
    <name type="synonym">STE9</name>
    <name type="synonym">UTH2</name>
    <name type="ordered locus">YDR227W</name>
    <name type="ORF">YD9934.12</name>
</gene>
<keyword id="KW-0002">3D-structure</keyword>
<keyword id="KW-0175">Coiled coil</keyword>
<keyword id="KW-0238">DNA-binding</keyword>
<keyword id="KW-1017">Isopeptide bond</keyword>
<keyword id="KW-0539">Nucleus</keyword>
<keyword id="KW-0597">Phosphoprotein</keyword>
<keyword id="KW-1185">Reference proteome</keyword>
<keyword id="KW-0678">Repressor</keyword>
<keyword id="KW-0804">Transcription</keyword>
<keyword id="KW-0805">Transcription regulation</keyword>
<keyword id="KW-0832">Ubl conjugation</keyword>
<proteinExistence type="evidence at protein level"/>
<feature type="chain" id="PRO_0000097769" description="Regulatory protein SIR4">
    <location>
        <begin position="1"/>
        <end position="1358"/>
    </location>
</feature>
<feature type="region of interest" description="Disordered" evidence="1">
    <location>
        <begin position="1"/>
        <end position="98"/>
    </location>
</feature>
<feature type="region of interest" description="Disordered" evidence="1">
    <location>
        <begin position="252"/>
        <end position="277"/>
    </location>
</feature>
<feature type="region of interest" description="Disordered" evidence="1">
    <location>
        <begin position="356"/>
        <end position="466"/>
    </location>
</feature>
<feature type="region of interest" description="Disordered" evidence="1">
    <location>
        <begin position="498"/>
        <end position="544"/>
    </location>
</feature>
<feature type="region of interest" description="Disordered" evidence="1">
    <location>
        <begin position="677"/>
        <end position="726"/>
    </location>
</feature>
<feature type="region of interest" description="Disordered" evidence="1">
    <location>
        <begin position="752"/>
        <end position="787"/>
    </location>
</feature>
<feature type="region of interest" description="Disordered" evidence="1">
    <location>
        <begin position="913"/>
        <end position="970"/>
    </location>
</feature>
<feature type="coiled-coil region">
    <location>
        <begin position="1271"/>
        <end position="1347"/>
    </location>
</feature>
<feature type="compositionally biased region" description="Polar residues" evidence="1">
    <location>
        <begin position="1"/>
        <end position="15"/>
    </location>
</feature>
<feature type="compositionally biased region" description="Basic and acidic residues" evidence="1">
    <location>
        <begin position="26"/>
        <end position="39"/>
    </location>
</feature>
<feature type="compositionally biased region" description="Polar residues" evidence="1">
    <location>
        <begin position="49"/>
        <end position="66"/>
    </location>
</feature>
<feature type="compositionally biased region" description="Polar residues" evidence="1">
    <location>
        <begin position="75"/>
        <end position="96"/>
    </location>
</feature>
<feature type="compositionally biased region" description="Basic and acidic residues" evidence="1">
    <location>
        <begin position="373"/>
        <end position="388"/>
    </location>
</feature>
<feature type="compositionally biased region" description="Polar residues" evidence="1">
    <location>
        <begin position="428"/>
        <end position="437"/>
    </location>
</feature>
<feature type="compositionally biased region" description="Basic and acidic residues" evidence="1">
    <location>
        <begin position="452"/>
        <end position="464"/>
    </location>
</feature>
<feature type="compositionally biased region" description="Polar residues" evidence="1">
    <location>
        <begin position="507"/>
        <end position="517"/>
    </location>
</feature>
<feature type="compositionally biased region" description="Polar residues" evidence="1">
    <location>
        <begin position="706"/>
        <end position="720"/>
    </location>
</feature>
<feature type="compositionally biased region" description="Acidic residues" evidence="1">
    <location>
        <begin position="754"/>
        <end position="766"/>
    </location>
</feature>
<feature type="compositionally biased region" description="Basic and acidic residues" evidence="1">
    <location>
        <begin position="777"/>
        <end position="787"/>
    </location>
</feature>
<feature type="compositionally biased region" description="Polar residues" evidence="1">
    <location>
        <begin position="916"/>
        <end position="932"/>
    </location>
</feature>
<feature type="modified residue" description="Phosphoserine" evidence="10">
    <location>
        <position position="692"/>
    </location>
</feature>
<feature type="cross-link" description="Glycyl lysine isopeptide (Lys-Gly) (interchain with G-Cter in SUMO)" evidence="4">
    <location>
        <position position="1128"/>
    </location>
</feature>
<feature type="sequence variant">
    <original>P</original>
    <variation>L</variation>
    <location>
        <position position="994"/>
    </location>
</feature>
<feature type="helix" evidence="12">
    <location>
        <begin position="808"/>
        <end position="821"/>
    </location>
</feature>
<feature type="helix" evidence="12">
    <location>
        <begin position="829"/>
        <end position="837"/>
    </location>
</feature>
<feature type="turn" evidence="12">
    <location>
        <begin position="846"/>
        <end position="848"/>
    </location>
</feature>
<feature type="turn" evidence="12">
    <location>
        <begin position="854"/>
        <end position="857"/>
    </location>
</feature>
<feature type="turn" evidence="12">
    <location>
        <begin position="861"/>
        <end position="863"/>
    </location>
</feature>
<feature type="helix" evidence="12">
    <location>
        <begin position="864"/>
        <end position="866"/>
    </location>
</feature>
<feature type="helix" evidence="12">
    <location>
        <begin position="869"/>
        <end position="872"/>
    </location>
</feature>
<feature type="strand" evidence="12">
    <location>
        <begin position="879"/>
        <end position="883"/>
    </location>
</feature>
<feature type="helix" evidence="14">
    <location>
        <begin position="969"/>
        <end position="982"/>
    </location>
</feature>
<feature type="strand" evidence="14">
    <location>
        <begin position="986"/>
        <end position="989"/>
    </location>
</feature>
<feature type="helix" evidence="14">
    <location>
        <begin position="999"/>
        <end position="1018"/>
    </location>
</feature>
<feature type="strand" evidence="14">
    <location>
        <begin position="1023"/>
        <end position="1026"/>
    </location>
</feature>
<feature type="helix" evidence="14">
    <location>
        <begin position="1028"/>
        <end position="1030"/>
    </location>
</feature>
<feature type="strand" evidence="14">
    <location>
        <begin position="1032"/>
        <end position="1038"/>
    </location>
</feature>
<feature type="helix" evidence="14">
    <location>
        <begin position="1040"/>
        <end position="1042"/>
    </location>
</feature>
<feature type="helix" evidence="14">
    <location>
        <begin position="1048"/>
        <end position="1057"/>
    </location>
</feature>
<feature type="strand" evidence="13">
    <location>
        <begin position="1060"/>
        <end position="1062"/>
    </location>
</feature>
<feature type="strand" evidence="14">
    <location>
        <begin position="1066"/>
        <end position="1069"/>
    </location>
</feature>
<feature type="helix" evidence="14">
    <location>
        <begin position="1070"/>
        <end position="1079"/>
    </location>
</feature>
<feature type="helix" evidence="11">
    <location>
        <begin position="1273"/>
        <end position="1342"/>
    </location>
</feature>
<feature type="turn" evidence="11">
    <location>
        <begin position="1343"/>
        <end position="1345"/>
    </location>
</feature>
<comment type="function">
    <text evidence="2 5">The proteins SIR1 through SIR4 are required for transcriptional repression of the silent mating type loci, HML and HMR (PubMed:18039933). The proteins SIR2 through SIR4 repress mulitple loci by modulating chromatin structure (PubMed:18039933). Involves the compaction of chromatin fiber into a more condensed form (PubMed:18039933).</text>
</comment>
<comment type="subunit">
    <text evidence="2 3 5 6 7 8 9">Homodimer (PubMed:12791253). Interacts with MPS3 (PubMed:18039933). Interacts with RIS1 (PubMed:9271422). Interacts with SIR1, SIR2 and SIR3 (PubMed:11722841). Interacts with YKU80 (PubMed:14551211). Interacts with UBP10 (PubMed:10490600, PubMed:26149687). Interacts with RAP1 (via C-terminus) (PubMed:7867933).</text>
</comment>
<comment type="interaction">
    <interactant intactId="EBI-17237">
        <id>P11978</id>
    </interactant>
    <interactant intactId="EBI-11756">
        <id>P38181</id>
        <label>NUP170</label>
    </interactant>
    <organismsDiffer>false</organismsDiffer>
    <experiments>3</experiments>
</comment>
<comment type="interaction">
    <interactant intactId="EBI-17237">
        <id>P11978</id>
    </interactant>
    <interactant intactId="EBI-14821">
        <id>P11938</id>
        <label>RAP1</label>
    </interactant>
    <organismsDiffer>false</organismsDiffer>
    <experiments>4</experiments>
</comment>
<comment type="interaction">
    <interactant intactId="EBI-17237">
        <id>P11978</id>
    </interactant>
    <interactant intactId="EBI-29119">
        <id>P40161</id>
        <label>RTT106</label>
    </interactant>
    <organismsDiffer>false</organismsDiffer>
    <experiments>2</experiments>
</comment>
<comment type="interaction">
    <interactant intactId="EBI-17237">
        <id>P11978</id>
    </interactant>
    <interactant intactId="EBI-17219">
        <id>P06700</id>
        <label>SIR2</label>
    </interactant>
    <organismsDiffer>false</organismsDiffer>
    <experiments>8</experiments>
</comment>
<comment type="interaction">
    <interactant intactId="EBI-17237">
        <id>P11978</id>
    </interactant>
    <interactant intactId="EBI-17230">
        <id>P06701</id>
        <label>SIR3</label>
    </interactant>
    <organismsDiffer>false</organismsDiffer>
    <experiments>8</experiments>
</comment>
<comment type="interaction">
    <interactant intactId="EBI-17237">
        <id>P11978</id>
    </interactant>
    <interactant intactId="EBI-8224">
        <id>Q04437</id>
        <label>YKU80</label>
    </interactant>
    <organismsDiffer>false</organismsDiffer>
    <experiments>2</experiments>
</comment>
<comment type="subcellular location">
    <subcellularLocation>
        <location>Nucleus</location>
    </subcellularLocation>
</comment>
<evidence type="ECO:0000256" key="1">
    <source>
        <dbReference type="SAM" id="MobiDB-lite"/>
    </source>
</evidence>
<evidence type="ECO:0000269" key="2">
    <source>
    </source>
</evidence>
<evidence type="ECO:0000269" key="3">
    <source>
    </source>
</evidence>
<evidence type="ECO:0000269" key="4">
    <source>
    </source>
</evidence>
<evidence type="ECO:0000269" key="5">
    <source>
    </source>
</evidence>
<evidence type="ECO:0000269" key="6">
    <source>
    </source>
</evidence>
<evidence type="ECO:0000269" key="7">
    <source>
    </source>
</evidence>
<evidence type="ECO:0000269" key="8">
    <source>
    </source>
</evidence>
<evidence type="ECO:0000303" key="9">
    <source>
    </source>
</evidence>
<evidence type="ECO:0007744" key="10">
    <source>
    </source>
</evidence>
<evidence type="ECO:0007829" key="11">
    <source>
        <dbReference type="PDB" id="1PL5"/>
    </source>
</evidence>
<evidence type="ECO:0007829" key="12">
    <source>
        <dbReference type="PDB" id="4IAO"/>
    </source>
</evidence>
<evidence type="ECO:0007829" key="13">
    <source>
        <dbReference type="PDB" id="6RR0"/>
    </source>
</evidence>
<evidence type="ECO:0007829" key="14">
    <source>
        <dbReference type="PDB" id="6RRV"/>
    </source>
</evidence>
<reference key="1">
    <citation type="journal article" date="1987" name="Mol. Cell. Biol.">
        <title>Functional domains of SIR4, a gene required for position effect regulation in Saccharomyces cerevisiae.</title>
        <authorList>
            <person name="Marshall M."/>
            <person name="Mahoney D."/>
            <person name="Rose A."/>
            <person name="Hicks J.B."/>
            <person name="Broach J.R."/>
        </authorList>
    </citation>
    <scope>NUCLEOTIDE SEQUENCE [GENOMIC DNA]</scope>
</reference>
<reference key="2">
    <citation type="journal article" date="1995" name="Nucleic Acids Res.">
        <title>Insertion site specificity of the transposon Tn3.</title>
        <authorList>
            <person name="Davies C.J."/>
            <person name="Hutchison C.A. III"/>
        </authorList>
    </citation>
    <scope>NUCLEOTIDE SEQUENCE [GENOMIC DNA]</scope>
</reference>
<reference key="3">
    <citation type="journal article" date="1997" name="Nature">
        <title>The nucleotide sequence of Saccharomyces cerevisiae chromosome IV.</title>
        <authorList>
            <person name="Jacq C."/>
            <person name="Alt-Moerbe J."/>
            <person name="Andre B."/>
            <person name="Arnold W."/>
            <person name="Bahr A."/>
            <person name="Ballesta J.P.G."/>
            <person name="Bargues M."/>
            <person name="Baron L."/>
            <person name="Becker A."/>
            <person name="Biteau N."/>
            <person name="Bloecker H."/>
            <person name="Blugeon C."/>
            <person name="Boskovic J."/>
            <person name="Brandt P."/>
            <person name="Brueckner M."/>
            <person name="Buitrago M.J."/>
            <person name="Coster F."/>
            <person name="Delaveau T."/>
            <person name="del Rey F."/>
            <person name="Dujon B."/>
            <person name="Eide L.G."/>
            <person name="Garcia-Cantalejo J.M."/>
            <person name="Goffeau A."/>
            <person name="Gomez-Peris A."/>
            <person name="Granotier C."/>
            <person name="Hanemann V."/>
            <person name="Hankeln T."/>
            <person name="Hoheisel J.D."/>
            <person name="Jaeger W."/>
            <person name="Jimenez A."/>
            <person name="Jonniaux J.-L."/>
            <person name="Kraemer C."/>
            <person name="Kuester H."/>
            <person name="Laamanen P."/>
            <person name="Legros Y."/>
            <person name="Louis E.J."/>
            <person name="Moeller-Rieker S."/>
            <person name="Monnet A."/>
            <person name="Moro M."/>
            <person name="Mueller-Auer S."/>
            <person name="Nussbaumer B."/>
            <person name="Paricio N."/>
            <person name="Paulin L."/>
            <person name="Perea J."/>
            <person name="Perez-Alonso M."/>
            <person name="Perez-Ortin J.E."/>
            <person name="Pohl T.M."/>
            <person name="Prydz H."/>
            <person name="Purnelle B."/>
            <person name="Rasmussen S.W."/>
            <person name="Remacha M.A."/>
            <person name="Revuelta J.L."/>
            <person name="Rieger M."/>
            <person name="Salom D."/>
            <person name="Saluz H.P."/>
            <person name="Saiz J.E."/>
            <person name="Saren A.-M."/>
            <person name="Schaefer M."/>
            <person name="Scharfe M."/>
            <person name="Schmidt E.R."/>
            <person name="Schneider C."/>
            <person name="Scholler P."/>
            <person name="Schwarz S."/>
            <person name="Soler-Mira A."/>
            <person name="Urrestarazu L.A."/>
            <person name="Verhasselt P."/>
            <person name="Vissers S."/>
            <person name="Voet M."/>
            <person name="Volckaert G."/>
            <person name="Wagner G."/>
            <person name="Wambutt R."/>
            <person name="Wedler E."/>
            <person name="Wedler H."/>
            <person name="Woelfl S."/>
            <person name="Harris D.E."/>
            <person name="Bowman S."/>
            <person name="Brown D."/>
            <person name="Churcher C.M."/>
            <person name="Connor R."/>
            <person name="Dedman K."/>
            <person name="Gentles S."/>
            <person name="Hamlin N."/>
            <person name="Hunt S."/>
            <person name="Jones L."/>
            <person name="McDonald S."/>
            <person name="Murphy L.D."/>
            <person name="Niblett D."/>
            <person name="Odell C."/>
            <person name="Oliver K."/>
            <person name="Rajandream M.A."/>
            <person name="Richards C."/>
            <person name="Shore L."/>
            <person name="Walsh S.V."/>
            <person name="Barrell B.G."/>
            <person name="Dietrich F.S."/>
            <person name="Mulligan J.T."/>
            <person name="Allen E."/>
            <person name="Araujo R."/>
            <person name="Aviles E."/>
            <person name="Berno A."/>
            <person name="Carpenter J."/>
            <person name="Chen E."/>
            <person name="Cherry J.M."/>
            <person name="Chung E."/>
            <person name="Duncan M."/>
            <person name="Hunicke-Smith S."/>
            <person name="Hyman R.W."/>
            <person name="Komp C."/>
            <person name="Lashkari D."/>
            <person name="Lew H."/>
            <person name="Lin D."/>
            <person name="Mosedale D."/>
            <person name="Nakahara K."/>
            <person name="Namath A."/>
            <person name="Oefner P."/>
            <person name="Oh C."/>
            <person name="Petel F.X."/>
            <person name="Roberts D."/>
            <person name="Schramm S."/>
            <person name="Schroeder M."/>
            <person name="Shogren T."/>
            <person name="Shroff N."/>
            <person name="Winant A."/>
            <person name="Yelton M.A."/>
            <person name="Botstein D."/>
            <person name="Davis R.W."/>
            <person name="Johnston M."/>
            <person name="Andrews S."/>
            <person name="Brinkman R."/>
            <person name="Cooper J."/>
            <person name="Ding H."/>
            <person name="Du Z."/>
            <person name="Favello A."/>
            <person name="Fulton L."/>
            <person name="Gattung S."/>
            <person name="Greco T."/>
            <person name="Hallsworth K."/>
            <person name="Hawkins J."/>
            <person name="Hillier L.W."/>
            <person name="Jier M."/>
            <person name="Johnson D."/>
            <person name="Johnston L."/>
            <person name="Kirsten J."/>
            <person name="Kucaba T."/>
            <person name="Langston Y."/>
            <person name="Latreille P."/>
            <person name="Le T."/>
            <person name="Mardis E."/>
            <person name="Menezes S."/>
            <person name="Miller N."/>
            <person name="Nhan M."/>
            <person name="Pauley A."/>
            <person name="Peluso D."/>
            <person name="Rifkin L."/>
            <person name="Riles L."/>
            <person name="Taich A."/>
            <person name="Trevaskis E."/>
            <person name="Vignati D."/>
            <person name="Wilcox L."/>
            <person name="Wohldman P."/>
            <person name="Vaudin M."/>
            <person name="Wilson R."/>
            <person name="Waterston R."/>
            <person name="Albermann K."/>
            <person name="Hani J."/>
            <person name="Heumann K."/>
            <person name="Kleine K."/>
            <person name="Mewes H.-W."/>
            <person name="Zollner A."/>
            <person name="Zaccaria P."/>
        </authorList>
    </citation>
    <scope>NUCLEOTIDE SEQUENCE [LARGE SCALE GENOMIC DNA]</scope>
    <source>
        <strain>ATCC 204508 / S288c</strain>
    </source>
</reference>
<reference key="4">
    <citation type="journal article" date="2014" name="G3 (Bethesda)">
        <title>The reference genome sequence of Saccharomyces cerevisiae: Then and now.</title>
        <authorList>
            <person name="Engel S.R."/>
            <person name="Dietrich F.S."/>
            <person name="Fisk D.G."/>
            <person name="Binkley G."/>
            <person name="Balakrishnan R."/>
            <person name="Costanzo M.C."/>
            <person name="Dwight S.S."/>
            <person name="Hitz B.C."/>
            <person name="Karra K."/>
            <person name="Nash R.S."/>
            <person name="Weng S."/>
            <person name="Wong E.D."/>
            <person name="Lloyd P."/>
            <person name="Skrzypek M.S."/>
            <person name="Miyasato S.R."/>
            <person name="Simison M."/>
            <person name="Cherry J.M."/>
        </authorList>
    </citation>
    <scope>GENOME REANNOTATION</scope>
    <source>
        <strain>ATCC 204508 / S288c</strain>
    </source>
</reference>
<reference key="5">
    <citation type="journal article" date="1995" name="Genes Dev.">
        <title>Action of a RAP1 carboxy-terminal silencing domain reveals an underlying competition between HMR and telomeres in yeast.</title>
        <authorList>
            <person name="Buck S.W."/>
            <person name="Shore D."/>
        </authorList>
    </citation>
    <scope>INTERACTION WITH RAP1</scope>
</reference>
<reference key="6">
    <citation type="journal article" date="1997" name="Mol. Cell. Biol.">
        <title>Identification of a member of a DNA-dependent ATPase family that causes interference with silencing.</title>
        <authorList>
            <person name="Zhang Z."/>
            <person name="Buchman A.R."/>
        </authorList>
    </citation>
    <scope>INTERACTION WITH RIS1</scope>
</reference>
<reference key="7">
    <citation type="journal article" date="1999" name="Mol. Cell. Biol.">
        <title>DOT4 links silencing and cell growth in Saccharomyces cerevisiae.</title>
        <authorList>
            <person name="Kahana A."/>
            <person name="Gottschling D.E."/>
        </authorList>
    </citation>
    <scope>FUNCTION</scope>
    <scope>INTERACTION WITH UBP10</scope>
</reference>
<reference key="8">
    <citation type="journal article" date="2001" name="Gene">
        <title>The molecular biology of the SIR proteins.</title>
        <authorList>
            <person name="Gasser S.M."/>
            <person name="Cockell M.M."/>
        </authorList>
    </citation>
    <scope>REVIEW</scope>
</reference>
<reference key="9">
    <citation type="journal article" date="2004" name="J. Biol. Chem.">
        <title>Separation-of-function mutants of yeast Ku80 reveal a Yku80p-Sir4p interaction involved in telomeric silencing.</title>
        <authorList>
            <person name="Roy R."/>
            <person name="Meier B."/>
            <person name="McAinsh A.D."/>
            <person name="Feldmann H.M."/>
            <person name="Jackson S.P."/>
        </authorList>
    </citation>
    <scope>INTERACTION WITH YKU80</scope>
</reference>
<reference key="10">
    <citation type="journal article" date="2005" name="Mol. Cell. Proteomics">
        <title>A proteomic strategy for gaining insights into protein sumoylation in yeast.</title>
        <authorList>
            <person name="Denison C."/>
            <person name="Rudner A.D."/>
            <person name="Gerber S.A."/>
            <person name="Bakalarski C.E."/>
            <person name="Moazed D."/>
            <person name="Gygi S.P."/>
        </authorList>
    </citation>
    <scope>SUMOYLATION [LARGE SCALE ANALYSIS] AT LYS-1128</scope>
    <scope>IDENTIFICATION BY MASS SPECTROMETRY</scope>
</reference>
<reference key="11">
    <citation type="journal article" date="2007" name="J. Cell Biol.">
        <title>Telomere anchoring at the nuclear periphery requires the budding yeast Sad1-UNC-84 domain protein Mps3.</title>
        <authorList>
            <person name="Bupp J.M."/>
            <person name="Martin A.E."/>
            <person name="Stensrud E.S."/>
            <person name="Jaspersen S.L."/>
        </authorList>
    </citation>
    <scope>FUNCTION</scope>
    <scope>INTERACTION WITH MPS3</scope>
</reference>
<reference key="12">
    <citation type="journal article" date="2007" name="J. Proteome Res.">
        <title>Large-scale phosphorylation analysis of alpha-factor-arrested Saccharomyces cerevisiae.</title>
        <authorList>
            <person name="Li X."/>
            <person name="Gerber S.A."/>
            <person name="Rudner A.D."/>
            <person name="Beausoleil S.A."/>
            <person name="Haas W."/>
            <person name="Villen J."/>
            <person name="Elias J.E."/>
            <person name="Gygi S.P."/>
        </authorList>
    </citation>
    <scope>IDENTIFICATION BY MASS SPECTROMETRY [LARGE SCALE ANALYSIS]</scope>
    <source>
        <strain>ADR376</strain>
    </source>
</reference>
<reference key="13">
    <citation type="journal article" date="2008" name="Mol. Cell. Proteomics">
        <title>A multidimensional chromatography technology for in-depth phosphoproteome analysis.</title>
        <authorList>
            <person name="Albuquerque C.P."/>
            <person name="Smolka M.B."/>
            <person name="Payne S.H."/>
            <person name="Bafna V."/>
            <person name="Eng J."/>
            <person name="Zhou H."/>
        </authorList>
    </citation>
    <scope>PHOSPHORYLATION [LARGE SCALE ANALYSIS] AT SER-692</scope>
    <scope>IDENTIFICATION BY MASS SPECTROMETRY [LARGE SCALE ANALYSIS]</scope>
</reference>
<reference key="14">
    <citation type="journal article" date="2009" name="Science">
        <title>Global analysis of Cdk1 substrate phosphorylation sites provides insights into evolution.</title>
        <authorList>
            <person name="Holt L.J."/>
            <person name="Tuch B.B."/>
            <person name="Villen J."/>
            <person name="Johnson A.D."/>
            <person name="Gygi S.P."/>
            <person name="Morgan D.O."/>
        </authorList>
    </citation>
    <scope>IDENTIFICATION BY MASS SPECTROMETRY [LARGE SCALE ANALYSIS]</scope>
</reference>
<reference key="15">
    <citation type="journal article" date="2012" name="Proc. Natl. Acad. Sci. U.S.A.">
        <title>N-terminal acetylome analyses and functional insights of the N-terminal acetyltransferase NatB.</title>
        <authorList>
            <person name="Van Damme P."/>
            <person name="Lasa M."/>
            <person name="Polevoda B."/>
            <person name="Gazquez C."/>
            <person name="Elosegui-Artola A."/>
            <person name="Kim D.S."/>
            <person name="De Juan-Pardo E."/>
            <person name="Demeyer K."/>
            <person name="Hole K."/>
            <person name="Larrea E."/>
            <person name="Timmerman E."/>
            <person name="Prieto J."/>
            <person name="Arnesen T."/>
            <person name="Sherman F."/>
            <person name="Gevaert K."/>
            <person name="Aldabe R."/>
        </authorList>
    </citation>
    <scope>IDENTIFICATION BY MASS SPECTROMETRY [LARGE SCALE ANALYSIS]</scope>
</reference>
<reference key="16">
    <citation type="journal article" date="2003" name="Structure">
        <title>Structure of the coiled-coil dimerization motif of Sir4 and its interaction with Sir3.</title>
        <authorList>
            <person name="Chang J.F."/>
            <person name="Hall B.E."/>
            <person name="Tanny J.C."/>
            <person name="Moazed D."/>
            <person name="Filman D."/>
            <person name="Ellenberger T."/>
        </authorList>
    </citation>
    <scope>X-RAY CRYSTALLOGRAPHY (3.1 ANGSTROMS) OF 1271-1346</scope>
</reference>
<reference key="17">
    <citation type="journal article" date="2015" name="J. Biol. Chem.">
        <title>A conserved deubiquitinating enzyme uses intrinsically disordered regions to scaffold multiple protein interaction sites.</title>
        <authorList>
            <person name="Reed B.J."/>
            <person name="Locke M.N."/>
            <person name="Gardner R.G."/>
        </authorList>
    </citation>
    <scope>INTERACTION WITH UBP10</scope>
</reference>
<dbReference type="EMBL" id="M37249">
    <property type="protein sequence ID" value="AAA20881.1"/>
    <property type="molecule type" value="Genomic_DNA"/>
</dbReference>
<dbReference type="EMBL" id="U13239">
    <property type="protein sequence ID" value="AAC33144.1"/>
    <property type="molecule type" value="Genomic_DNA"/>
</dbReference>
<dbReference type="EMBL" id="Z48612">
    <property type="protein sequence ID" value="CAA88507.1"/>
    <property type="molecule type" value="Genomic_DNA"/>
</dbReference>
<dbReference type="EMBL" id="BK006938">
    <property type="protein sequence ID" value="DAA12069.1"/>
    <property type="molecule type" value="Genomic_DNA"/>
</dbReference>
<dbReference type="PIR" id="A29360">
    <property type="entry name" value="A29360"/>
</dbReference>
<dbReference type="RefSeq" id="NP_010513.1">
    <property type="nucleotide sequence ID" value="NM_001180535.1"/>
</dbReference>
<dbReference type="PDB" id="1NYH">
    <property type="method" value="X-ray"/>
    <property type="resolution" value="3.10 A"/>
    <property type="chains" value="A=1198-1358"/>
</dbReference>
<dbReference type="PDB" id="1PL5">
    <property type="method" value="X-ray"/>
    <property type="resolution" value="2.50 A"/>
    <property type="chains" value="A/S=1217-1358"/>
</dbReference>
<dbReference type="PDB" id="4IAO">
    <property type="method" value="X-ray"/>
    <property type="resolution" value="2.90 A"/>
    <property type="chains" value="C/D=737-893"/>
</dbReference>
<dbReference type="PDB" id="6QSZ">
    <property type="method" value="X-ray"/>
    <property type="resolution" value="2.50 A"/>
    <property type="chains" value="A/C/E/G/I/K/M/O=961-1085"/>
</dbReference>
<dbReference type="PDB" id="6QTM">
    <property type="method" value="X-ray"/>
    <property type="resolution" value="3.00 A"/>
    <property type="chains" value="A/B/C=961-1085"/>
</dbReference>
<dbReference type="PDB" id="6RR0">
    <property type="method" value="X-ray"/>
    <property type="resolution" value="2.18 A"/>
    <property type="chains" value="A/B/C/D/E/F/G=961-1085"/>
</dbReference>
<dbReference type="PDB" id="6RRV">
    <property type="method" value="X-ray"/>
    <property type="resolution" value="1.10 A"/>
    <property type="chains" value="A=961-1085"/>
</dbReference>
<dbReference type="PDBsum" id="1NYH"/>
<dbReference type="PDBsum" id="1PL5"/>
<dbReference type="PDBsum" id="4IAO"/>
<dbReference type="PDBsum" id="6QSZ"/>
<dbReference type="PDBsum" id="6QTM"/>
<dbReference type="PDBsum" id="6RR0"/>
<dbReference type="PDBsum" id="6RRV"/>
<dbReference type="SMR" id="P11978"/>
<dbReference type="BioGRID" id="32279">
    <property type="interactions" value="148"/>
</dbReference>
<dbReference type="ComplexPortal" id="CPX-1811">
    <property type="entry name" value="Sir2-3-4 silent chromatin complex"/>
</dbReference>
<dbReference type="DIP" id="DIP-33N"/>
<dbReference type="FunCoup" id="P11978">
    <property type="interactions" value="133"/>
</dbReference>
<dbReference type="IntAct" id="P11978">
    <property type="interactions" value="36"/>
</dbReference>
<dbReference type="MINT" id="P11978"/>
<dbReference type="STRING" id="4932.YDR227W"/>
<dbReference type="GlyGen" id="P11978">
    <property type="glycosylation" value="1 site, 1 O-linked glycan (1 site)"/>
</dbReference>
<dbReference type="iPTMnet" id="P11978"/>
<dbReference type="PaxDb" id="4932-YDR227W"/>
<dbReference type="PeptideAtlas" id="P11978"/>
<dbReference type="EnsemblFungi" id="YDR227W_mRNA">
    <property type="protein sequence ID" value="YDR227W"/>
    <property type="gene ID" value="YDR227W"/>
</dbReference>
<dbReference type="GeneID" id="851813"/>
<dbReference type="KEGG" id="sce:YDR227W"/>
<dbReference type="AGR" id="SGD:S000002635"/>
<dbReference type="SGD" id="S000002635">
    <property type="gene designation" value="SIR4"/>
</dbReference>
<dbReference type="VEuPathDB" id="FungiDB:YDR227W"/>
<dbReference type="eggNOG" id="ENOG502S6NU">
    <property type="taxonomic scope" value="Eukaryota"/>
</dbReference>
<dbReference type="HOGENOM" id="CLU_257187_0_0_1"/>
<dbReference type="InParanoid" id="P11978"/>
<dbReference type="OMA" id="HIYFENS"/>
<dbReference type="OrthoDB" id="4049601at2759"/>
<dbReference type="BioCyc" id="YEAST:G3O-29806-MONOMER"/>
<dbReference type="BioGRID-ORCS" id="851813">
    <property type="hits" value="0 hits in 10 CRISPR screens"/>
</dbReference>
<dbReference type="EvolutionaryTrace" id="P11978"/>
<dbReference type="PRO" id="PR:P11978"/>
<dbReference type="Proteomes" id="UP000002311">
    <property type="component" value="Chromosome IV"/>
</dbReference>
<dbReference type="RNAct" id="P11978">
    <property type="molecule type" value="protein"/>
</dbReference>
<dbReference type="GO" id="GO:0005677">
    <property type="term" value="C:chromatin silencing complex"/>
    <property type="evidence" value="ECO:0000314"/>
    <property type="project" value="SGD"/>
</dbReference>
<dbReference type="GO" id="GO:0000781">
    <property type="term" value="C:chromosome, telomeric region"/>
    <property type="evidence" value="ECO:0000314"/>
    <property type="project" value="SGD"/>
</dbReference>
<dbReference type="GO" id="GO:0003690">
    <property type="term" value="F:double-stranded DNA binding"/>
    <property type="evidence" value="ECO:0000314"/>
    <property type="project" value="SGD"/>
</dbReference>
<dbReference type="GO" id="GO:0060090">
    <property type="term" value="F:molecular adaptor activity"/>
    <property type="evidence" value="ECO:0000315"/>
    <property type="project" value="SGD"/>
</dbReference>
<dbReference type="GO" id="GO:0031491">
    <property type="term" value="F:nucleosome binding"/>
    <property type="evidence" value="ECO:0000314"/>
    <property type="project" value="SGD"/>
</dbReference>
<dbReference type="GO" id="GO:0006303">
    <property type="term" value="P:double-strand break repair via nonhomologous end joining"/>
    <property type="evidence" value="ECO:0000315"/>
    <property type="project" value="SGD"/>
</dbReference>
<dbReference type="GO" id="GO:0097695">
    <property type="term" value="P:establishment of protein-containing complex localization to telomere"/>
    <property type="evidence" value="ECO:0000315"/>
    <property type="project" value="SGD"/>
</dbReference>
<dbReference type="GO" id="GO:0031507">
    <property type="term" value="P:heterochromatin formation"/>
    <property type="evidence" value="ECO:0000303"/>
    <property type="project" value="ComplexPortal"/>
</dbReference>
<dbReference type="GO" id="GO:0031453">
    <property type="term" value="P:positive regulation of heterochromatin formation"/>
    <property type="evidence" value="ECO:0000315"/>
    <property type="project" value="SGD"/>
</dbReference>
<dbReference type="GO" id="GO:0030466">
    <property type="term" value="P:silent mating-type cassette heterochromatin formation"/>
    <property type="evidence" value="ECO:0000315"/>
    <property type="project" value="SGD"/>
</dbReference>
<dbReference type="GO" id="GO:0031509">
    <property type="term" value="P:subtelomeric heterochromatin formation"/>
    <property type="evidence" value="ECO:0000315"/>
    <property type="project" value="SGD"/>
</dbReference>
<dbReference type="GO" id="GO:0034398">
    <property type="term" value="P:telomere tethering at nuclear periphery"/>
    <property type="evidence" value="ECO:0000315"/>
    <property type="project" value="SGD"/>
</dbReference>
<dbReference type="CDD" id="cd22863">
    <property type="entry name" value="Sir4_CC_C"/>
    <property type="match status" value="1"/>
</dbReference>
<dbReference type="CDD" id="cd13746">
    <property type="entry name" value="Sir4p-SID_like"/>
    <property type="match status" value="1"/>
</dbReference>
<dbReference type="Gene3D" id="6.10.140.1820">
    <property type="match status" value="1"/>
</dbReference>
<dbReference type="Gene3D" id="1.20.5.730">
    <property type="entry name" value="Single helix bin"/>
    <property type="match status" value="1"/>
</dbReference>
<dbReference type="InterPro" id="IPR031556">
    <property type="entry name" value="SIR4_SID"/>
</dbReference>
<dbReference type="Pfam" id="PF16991">
    <property type="entry name" value="SIR4_SID"/>
    <property type="match status" value="1"/>
</dbReference>
<dbReference type="SUPFAM" id="SSF90242">
    <property type="entry name" value="Dimerization motif of sir4"/>
    <property type="match status" value="1"/>
</dbReference>
<protein>
    <recommendedName>
        <fullName>Regulatory protein SIR4</fullName>
    </recommendedName>
    <alternativeName>
        <fullName>Silent information regulator 4</fullName>
    </alternativeName>
</protein>
<organism>
    <name type="scientific">Saccharomyces cerevisiae (strain ATCC 204508 / S288c)</name>
    <name type="common">Baker's yeast</name>
    <dbReference type="NCBI Taxonomy" id="559292"/>
    <lineage>
        <taxon>Eukaryota</taxon>
        <taxon>Fungi</taxon>
        <taxon>Dikarya</taxon>
        <taxon>Ascomycota</taxon>
        <taxon>Saccharomycotina</taxon>
        <taxon>Saccharomycetes</taxon>
        <taxon>Saccharomycetales</taxon>
        <taxon>Saccharomycetaceae</taxon>
        <taxon>Saccharomyces</taxon>
    </lineage>
</organism>
<name>SIR4_YEAST</name>
<accession>P11978</accession>
<accession>D6VSK9</accession>
<sequence>MPNDNKTPNRSSTPKFTKKPVTPNDKIPEREEKSNEVKTPKIPLFTFAKSKNYSRPSTAIHTSPHQPSDVKPTSHKQLQQPKSSPLKKNNYNSFPHSNLEKISNSKLLSLLRSKTSAGRIESNNPSHDASRSLASFEQTAFSRHAQQQTSTFNSKPVRTIVPISTSQTNNSFLSGVKSLLSEEKIRDYSKEILGINLANEQPVLEKPLKKGSADIGASVISLTKDKSIRKDTVEEKKEEKLNIGKNFAHSDSLSVPKVSAGDSGISPEESKARSPGIAKPNAIQTEVYGINEESTNERLEINQEKPVKLDENSANSTVASALDTNGTSATTETLTSKKIVPSPKKVAIDQDKITLHDEKTLAPSKHQPITSEQKMKEDADLKRMEILKSPHLSKSPADRPQGRRNSRNFSTRDEETTKLAFLVEYEGQENNYNSTSRSTEKKNDMNTSAKNKNGENKKIGKRPPEIMSTEAHVNKVTEETTKQIQSVRIDGRKVLQKVQGESHIDSRNNTLNVTPSKRPQLGEIPNPMKKHKPNEGRTPNISNGTINIQKKLEPKEIVRDILHTKESSNEAKKTIQNPLNKSQNTALPSTHKVTQKKDIKIGTNDLFQVESAPKISSEIDRENVKSKDEPVSKAVESKSLLNLFSNVLKAPFIKSESKPFSSDALSKEKANFLETIASTEKPENKTDKVSLSQPVSASKHEYSDNFPVSLSQPSKKSFANHTEDEQIEKKKICRGRMNTIITHPGKMELVYVSDSDDSSSDNDSLTDLESLSSGESNEIKVTNDLDTSAEKDQIQAGKWFDPVLDWRKSDRELTKNILWRIADKTTYDKETITDLIEQGIPKHSYLSGNPLTSVTNDICSVENYETSSAFFYQQVHKKDRLQYLPLYAVSTFENTNNTEKNDVTNKNINIGKHSQEQNSSSAKPSQIPTVSSPLGFEETKLSTTPTKSNRRVSHSDTNSSKPKNTKENLSKSSWRQEWLANLKLISVSLVDEFPSELSDSDRQIINEKMQLLKDIFANNLKSAISNNFRESDIIILKGEIEDYPMSSEIKIYYNELQNKPDAKKARFWSFMKTQRFVSNMGFDIQKSCEPVSISTSVKPHVVEPEHMADAKIMPKDILQITKKPLMVKNVKPSSPPDVKSLVQLSTMETKTLPEKKQFDSIFNSNKAKIIPGNGKHASENISLSFSRPASYGYFSVGKRVPIVEDRRVKQLDDITDSNTTEILTSVDVLGTHSQTGTQQSNMYTSTQKTELEIDNKDSVTECSKDMKEDGLSFVDIVLSKAASALDEKEKQLAVANEIIRSLSDEVMRNEIRITSLQGDLTFTKKCLENARSQISEKDAKINKLMEKDFQVNKEIKPY</sequence>